<gene>
    <name type="primary">Srp68</name>
</gene>
<evidence type="ECO:0000250" key="1">
    <source>
        <dbReference type="UniProtKB" id="P38687"/>
    </source>
</evidence>
<evidence type="ECO:0000250" key="2">
    <source>
        <dbReference type="UniProtKB" id="Q00004"/>
    </source>
</evidence>
<evidence type="ECO:0000250" key="3">
    <source>
        <dbReference type="UniProtKB" id="Q9UHB9"/>
    </source>
</evidence>
<evidence type="ECO:0000256" key="4">
    <source>
        <dbReference type="SAM" id="MobiDB-lite"/>
    </source>
</evidence>
<evidence type="ECO:0000305" key="5"/>
<organism>
    <name type="scientific">Mus musculus</name>
    <name type="common">Mouse</name>
    <dbReference type="NCBI Taxonomy" id="10090"/>
    <lineage>
        <taxon>Eukaryota</taxon>
        <taxon>Metazoa</taxon>
        <taxon>Chordata</taxon>
        <taxon>Craniata</taxon>
        <taxon>Vertebrata</taxon>
        <taxon>Euteleostomi</taxon>
        <taxon>Mammalia</taxon>
        <taxon>Eutheria</taxon>
        <taxon>Euarchontoglires</taxon>
        <taxon>Glires</taxon>
        <taxon>Rodentia</taxon>
        <taxon>Myomorpha</taxon>
        <taxon>Muroidea</taxon>
        <taxon>Muridae</taxon>
        <taxon>Murinae</taxon>
        <taxon>Mus</taxon>
        <taxon>Mus</taxon>
    </lineage>
</organism>
<comment type="function">
    <text evidence="1 3">Component of the signal recognition particle (SRP) complex, a ribonucleoprotein complex that mediates the cotranslational targeting of secretory and membrane proteins to the endoplasmic reticulum (ER) (By similarity). The SRP complex interacts with the signal sequence in nascent secretory and membrane proteins and directs them to the membrane of the ER (By similarity). The SRP complex targets the ribosome-nascent chain complex to the SRP receptor (SR), which is anchored in the ER, where SR compaction and GTPase rearrangement drive cotranslational protein translocation into the ER (By similarity). Binds the signal recognition particle RNA (7SL RNA), SRP72 binds to this complex subsequently (By similarity). The SRP complex possibly participates in the elongation arrest function (By similarity).</text>
</comment>
<comment type="subunit">
    <text evidence="2 3">Heterodimer with SRP72 (By similarity). SRP68/SRP72 heterodimer formation is stabilized by the presence of 7SL RNA (By similarity). Component of a signal recognition particle (SRP) complex that consists of a 7SL RNA molecule of 300 nucleotides and six protein subunits: SRP72, SRP68, SRP54, SRP19, SRP14 and SRP9 (By similarity). Within the SRP complex, interacts (via C-terminus) with SRP72 (via N-terminus) (By similarity).</text>
</comment>
<comment type="subcellular location">
    <subcellularLocation>
        <location evidence="3">Cytoplasm</location>
    </subcellularLocation>
    <subcellularLocation>
        <location evidence="3">Nucleus</location>
        <location evidence="3">Nucleolus</location>
    </subcellularLocation>
    <subcellularLocation>
        <location evidence="3">Endoplasmic reticulum</location>
    </subcellularLocation>
</comment>
<comment type="domain">
    <text evidence="3">The N-terminus is required for RNA-binding.</text>
</comment>
<comment type="similarity">
    <text evidence="5">Belongs to the SRP68 family.</text>
</comment>
<dbReference type="EMBL" id="AK033010">
    <property type="protein sequence ID" value="BAC28124.1"/>
    <property type="molecule type" value="mRNA"/>
</dbReference>
<dbReference type="EMBL" id="AL645861">
    <property type="status" value="NOT_ANNOTATED_CDS"/>
    <property type="molecule type" value="Genomic_DNA"/>
</dbReference>
<dbReference type="EMBL" id="AL669925">
    <property type="status" value="NOT_ANNOTATED_CDS"/>
    <property type="molecule type" value="Genomic_DNA"/>
</dbReference>
<dbReference type="EMBL" id="CH466558">
    <property type="protein sequence ID" value="EDL34568.1"/>
    <property type="molecule type" value="Genomic_DNA"/>
</dbReference>
<dbReference type="EMBL" id="BC070422">
    <property type="protein sequence ID" value="AAH70422.1"/>
    <property type="molecule type" value="mRNA"/>
</dbReference>
<dbReference type="CCDS" id="CCDS25662.1"/>
<dbReference type="RefSeq" id="NP_666144.3">
    <property type="nucleotide sequence ID" value="NM_146032.3"/>
</dbReference>
<dbReference type="SMR" id="Q8BMA6"/>
<dbReference type="BioGRID" id="229892">
    <property type="interactions" value="24"/>
</dbReference>
<dbReference type="FunCoup" id="Q8BMA6">
    <property type="interactions" value="3838"/>
</dbReference>
<dbReference type="STRING" id="10090.ENSMUSP00000021133"/>
<dbReference type="GlyGen" id="Q8BMA6">
    <property type="glycosylation" value="1 site, 1 O-linked glycan (1 site)"/>
</dbReference>
<dbReference type="iPTMnet" id="Q8BMA6"/>
<dbReference type="PhosphoSitePlus" id="Q8BMA6"/>
<dbReference type="SwissPalm" id="Q8BMA6"/>
<dbReference type="jPOST" id="Q8BMA6"/>
<dbReference type="PaxDb" id="10090-ENSMUSP00000021133"/>
<dbReference type="PeptideAtlas" id="Q8BMA6"/>
<dbReference type="ProteomicsDB" id="257401"/>
<dbReference type="Pumba" id="Q8BMA6"/>
<dbReference type="Antibodypedia" id="19656">
    <property type="antibodies" value="136 antibodies from 24 providers"/>
</dbReference>
<dbReference type="DNASU" id="217337"/>
<dbReference type="Ensembl" id="ENSMUST00000021133.16">
    <property type="protein sequence ID" value="ENSMUSP00000021133.10"/>
    <property type="gene ID" value="ENSMUSG00000020780.16"/>
</dbReference>
<dbReference type="GeneID" id="217337"/>
<dbReference type="KEGG" id="mmu:217337"/>
<dbReference type="UCSC" id="uc007mkq.1">
    <property type="organism name" value="mouse"/>
</dbReference>
<dbReference type="AGR" id="MGI:1917447"/>
<dbReference type="CTD" id="6730"/>
<dbReference type="MGI" id="MGI:1917447">
    <property type="gene designation" value="Srp68"/>
</dbReference>
<dbReference type="VEuPathDB" id="HostDB:ENSMUSG00000020780"/>
<dbReference type="eggNOG" id="KOG2460">
    <property type="taxonomic scope" value="Eukaryota"/>
</dbReference>
<dbReference type="GeneTree" id="ENSGT00390000011856"/>
<dbReference type="HOGENOM" id="CLU_018649_0_1_1"/>
<dbReference type="InParanoid" id="Q8BMA6"/>
<dbReference type="OMA" id="DERFIHI"/>
<dbReference type="OrthoDB" id="10255118at2759"/>
<dbReference type="PhylomeDB" id="Q8BMA6"/>
<dbReference type="TreeFam" id="TF105779"/>
<dbReference type="Reactome" id="R-MMU-1799339">
    <property type="pathway name" value="SRP-dependent cotranslational protein targeting to membrane"/>
</dbReference>
<dbReference type="BioGRID-ORCS" id="217337">
    <property type="hits" value="26 hits in 79 CRISPR screens"/>
</dbReference>
<dbReference type="ChiTaRS" id="Srp68">
    <property type="organism name" value="mouse"/>
</dbReference>
<dbReference type="PRO" id="PR:Q8BMA6"/>
<dbReference type="Proteomes" id="UP000000589">
    <property type="component" value="Chromosome 11"/>
</dbReference>
<dbReference type="RNAct" id="Q8BMA6">
    <property type="molecule type" value="protein"/>
</dbReference>
<dbReference type="Bgee" id="ENSMUSG00000020780">
    <property type="expression patterns" value="Expressed in lacrimal gland and 261 other cell types or tissues"/>
</dbReference>
<dbReference type="ExpressionAtlas" id="Q8BMA6">
    <property type="expression patterns" value="baseline and differential"/>
</dbReference>
<dbReference type="GO" id="GO:0005829">
    <property type="term" value="C:cytosol"/>
    <property type="evidence" value="ECO:0007669"/>
    <property type="project" value="Ensembl"/>
</dbReference>
<dbReference type="GO" id="GO:0005783">
    <property type="term" value="C:endoplasmic reticulum"/>
    <property type="evidence" value="ECO:0007669"/>
    <property type="project" value="UniProtKB-SubCell"/>
</dbReference>
<dbReference type="GO" id="GO:0005925">
    <property type="term" value="C:focal adhesion"/>
    <property type="evidence" value="ECO:0007669"/>
    <property type="project" value="Ensembl"/>
</dbReference>
<dbReference type="GO" id="GO:0005730">
    <property type="term" value="C:nucleolus"/>
    <property type="evidence" value="ECO:0000266"/>
    <property type="project" value="MGI"/>
</dbReference>
<dbReference type="GO" id="GO:0005786">
    <property type="term" value="C:signal recognition particle, endoplasmic reticulum targeting"/>
    <property type="evidence" value="ECO:0007669"/>
    <property type="project" value="UniProtKB-KW"/>
</dbReference>
<dbReference type="GO" id="GO:0008312">
    <property type="term" value="F:7S RNA binding"/>
    <property type="evidence" value="ECO:0007669"/>
    <property type="project" value="Ensembl"/>
</dbReference>
<dbReference type="GO" id="GO:0030942">
    <property type="term" value="F:endoplasmic reticulum signal peptide binding"/>
    <property type="evidence" value="ECO:0007669"/>
    <property type="project" value="InterPro"/>
</dbReference>
<dbReference type="GO" id="GO:0019904">
    <property type="term" value="F:protein domain specific binding"/>
    <property type="evidence" value="ECO:0007669"/>
    <property type="project" value="Ensembl"/>
</dbReference>
<dbReference type="GO" id="GO:0043022">
    <property type="term" value="F:ribosome binding"/>
    <property type="evidence" value="ECO:0007669"/>
    <property type="project" value="Ensembl"/>
</dbReference>
<dbReference type="GO" id="GO:0005047">
    <property type="term" value="F:signal recognition particle binding"/>
    <property type="evidence" value="ECO:0007669"/>
    <property type="project" value="Ensembl"/>
</dbReference>
<dbReference type="GO" id="GO:0009410">
    <property type="term" value="P:response to xenobiotic stimulus"/>
    <property type="evidence" value="ECO:0007669"/>
    <property type="project" value="Ensembl"/>
</dbReference>
<dbReference type="GO" id="GO:0006614">
    <property type="term" value="P:SRP-dependent cotranslational protein targeting to membrane"/>
    <property type="evidence" value="ECO:0007669"/>
    <property type="project" value="InterPro"/>
</dbReference>
<dbReference type="CDD" id="cd15481">
    <property type="entry name" value="SRP68-RBD"/>
    <property type="match status" value="1"/>
</dbReference>
<dbReference type="FunFam" id="1.10.3450.40:FF:000001">
    <property type="entry name" value="Signal recognition particle subunit SRP68"/>
    <property type="match status" value="1"/>
</dbReference>
<dbReference type="Gene3D" id="1.10.3450.40">
    <property type="entry name" value="Signal recognition particle, SRP68 subunit, RNA-binding domain"/>
    <property type="match status" value="1"/>
</dbReference>
<dbReference type="InterPro" id="IPR026258">
    <property type="entry name" value="SRP68"/>
</dbReference>
<dbReference type="InterPro" id="IPR034652">
    <property type="entry name" value="SRP68-RBD"/>
</dbReference>
<dbReference type="InterPro" id="IPR038253">
    <property type="entry name" value="SRP68_N_sf"/>
</dbReference>
<dbReference type="PANTHER" id="PTHR12860">
    <property type="entry name" value="SIGNAL RECOGNITION PARTICLE 68 KDA PROTEIN"/>
    <property type="match status" value="1"/>
</dbReference>
<dbReference type="PANTHER" id="PTHR12860:SF0">
    <property type="entry name" value="SIGNAL RECOGNITION PARTICLE SUBUNIT SRP68"/>
    <property type="match status" value="1"/>
</dbReference>
<dbReference type="Pfam" id="PF16969">
    <property type="entry name" value="SRP68"/>
    <property type="match status" value="1"/>
</dbReference>
<dbReference type="PIRSF" id="PIRSF038995">
    <property type="entry name" value="SRP68"/>
    <property type="match status" value="1"/>
</dbReference>
<feature type="chain" id="PRO_0000135228" description="Signal recognition particle subunit SRP68">
    <location>
        <begin position="1"/>
        <end position="625"/>
    </location>
</feature>
<feature type="region of interest" description="Disordered" evidence="4">
    <location>
        <begin position="1"/>
        <end position="52"/>
    </location>
</feature>
<feature type="region of interest" description="RNA-binding" evidence="3">
    <location>
        <begin position="51"/>
        <end position="251"/>
    </location>
</feature>
<feature type="region of interest" description="Required for interaction with SRP72" evidence="3">
    <location>
        <begin position="586"/>
        <end position="608"/>
    </location>
</feature>
<feature type="compositionally biased region" description="Gly residues" evidence="4">
    <location>
        <begin position="8"/>
        <end position="32"/>
    </location>
</feature>
<feature type="compositionally biased region" description="Basic and acidic residues" evidence="4">
    <location>
        <begin position="33"/>
        <end position="42"/>
    </location>
</feature>
<feature type="modified residue" description="Phosphoserine" evidence="3">
    <location>
        <position position="47"/>
    </location>
</feature>
<feature type="modified residue" description="Phosphoserine" evidence="3">
    <location>
        <position position="240"/>
    </location>
</feature>
<feature type="modified residue" description="N6-acetyllysine" evidence="3">
    <location>
        <position position="451"/>
    </location>
</feature>
<feature type="sequence conflict" description="In Ref. 1; BAC28124." evidence="5" ref="1">
    <original>R</original>
    <variation>Q</variation>
    <location>
        <position position="176"/>
    </location>
</feature>
<feature type="sequence conflict" description="In Ref. 1; BAC28124." evidence="5" ref="1">
    <original>S</original>
    <variation>Y</variation>
    <location>
        <position position="544"/>
    </location>
</feature>
<sequence>MAAEKQIPGGGSGGGGSGSGGGGGGSGGGRSAGGDENKENERPSAGSKANKEFGDSLSLEILQIIKESQQQHGLRHGDFQRYRGYCSRRQRRLRKTLNFKMGNRHKFTGKKVTEELLTDNRYLLLVLMDAERAWSYAMQLKQEANTEPRKRFHLLSRLRKAVKHAEELERLCESNRVDAKTKLEAQAYTAYLSGMLRFEHQEWKSAIEAFNKCKTIYEKLASAFTEEQAVLYNQRVEEISPNIRYCAYNIGDQSAINELMQMRLRSGGTEGLLAEKLEALITQTRAKQAATMSEVEWRGRTVPVKIDKVRIFLLGLADNEAAIVQAESEETKERLFESMLSECRDALQAVREELKPDQKQRDYALDGESGKVSNLQYLHSYLTYIKLSTAIRRNENMAKGLHRALLQQQPEDDSKRSPRPQDLIRLYDIILQNLVELLQLPGLEEDRTFQKEISLKTLVFKAYRCFFIAQSYVLVKKWSEALVLYDRVLKYANEVSSHGGASKNSLKDLPDVQELITQVRSEKCSLQAAAILDANDSHQTDTSSQVKDNTPLVERFESFCLDPSLVTKQANLVHFPPGFQPIPCKPLFFDLALNHVAFPPLEDKLEQKTKSGLTGYIKGIFGFRS</sequence>
<accession>Q8BMA6</accession>
<accession>A2AAN1</accession>
<accession>Q6NS76</accession>
<name>SRP68_MOUSE</name>
<reference key="1">
    <citation type="journal article" date="2005" name="Science">
        <title>The transcriptional landscape of the mammalian genome.</title>
        <authorList>
            <person name="Carninci P."/>
            <person name="Kasukawa T."/>
            <person name="Katayama S."/>
            <person name="Gough J."/>
            <person name="Frith M.C."/>
            <person name="Maeda N."/>
            <person name="Oyama R."/>
            <person name="Ravasi T."/>
            <person name="Lenhard B."/>
            <person name="Wells C."/>
            <person name="Kodzius R."/>
            <person name="Shimokawa K."/>
            <person name="Bajic V.B."/>
            <person name="Brenner S.E."/>
            <person name="Batalov S."/>
            <person name="Forrest A.R."/>
            <person name="Zavolan M."/>
            <person name="Davis M.J."/>
            <person name="Wilming L.G."/>
            <person name="Aidinis V."/>
            <person name="Allen J.E."/>
            <person name="Ambesi-Impiombato A."/>
            <person name="Apweiler R."/>
            <person name="Aturaliya R.N."/>
            <person name="Bailey T.L."/>
            <person name="Bansal M."/>
            <person name="Baxter L."/>
            <person name="Beisel K.W."/>
            <person name="Bersano T."/>
            <person name="Bono H."/>
            <person name="Chalk A.M."/>
            <person name="Chiu K.P."/>
            <person name="Choudhary V."/>
            <person name="Christoffels A."/>
            <person name="Clutterbuck D.R."/>
            <person name="Crowe M.L."/>
            <person name="Dalla E."/>
            <person name="Dalrymple B.P."/>
            <person name="de Bono B."/>
            <person name="Della Gatta G."/>
            <person name="di Bernardo D."/>
            <person name="Down T."/>
            <person name="Engstrom P."/>
            <person name="Fagiolini M."/>
            <person name="Faulkner G."/>
            <person name="Fletcher C.F."/>
            <person name="Fukushima T."/>
            <person name="Furuno M."/>
            <person name="Futaki S."/>
            <person name="Gariboldi M."/>
            <person name="Georgii-Hemming P."/>
            <person name="Gingeras T.R."/>
            <person name="Gojobori T."/>
            <person name="Green R.E."/>
            <person name="Gustincich S."/>
            <person name="Harbers M."/>
            <person name="Hayashi Y."/>
            <person name="Hensch T.K."/>
            <person name="Hirokawa N."/>
            <person name="Hill D."/>
            <person name="Huminiecki L."/>
            <person name="Iacono M."/>
            <person name="Ikeo K."/>
            <person name="Iwama A."/>
            <person name="Ishikawa T."/>
            <person name="Jakt M."/>
            <person name="Kanapin A."/>
            <person name="Katoh M."/>
            <person name="Kawasawa Y."/>
            <person name="Kelso J."/>
            <person name="Kitamura H."/>
            <person name="Kitano H."/>
            <person name="Kollias G."/>
            <person name="Krishnan S.P."/>
            <person name="Kruger A."/>
            <person name="Kummerfeld S.K."/>
            <person name="Kurochkin I.V."/>
            <person name="Lareau L.F."/>
            <person name="Lazarevic D."/>
            <person name="Lipovich L."/>
            <person name="Liu J."/>
            <person name="Liuni S."/>
            <person name="McWilliam S."/>
            <person name="Madan Babu M."/>
            <person name="Madera M."/>
            <person name="Marchionni L."/>
            <person name="Matsuda H."/>
            <person name="Matsuzawa S."/>
            <person name="Miki H."/>
            <person name="Mignone F."/>
            <person name="Miyake S."/>
            <person name="Morris K."/>
            <person name="Mottagui-Tabar S."/>
            <person name="Mulder N."/>
            <person name="Nakano N."/>
            <person name="Nakauchi H."/>
            <person name="Ng P."/>
            <person name="Nilsson R."/>
            <person name="Nishiguchi S."/>
            <person name="Nishikawa S."/>
            <person name="Nori F."/>
            <person name="Ohara O."/>
            <person name="Okazaki Y."/>
            <person name="Orlando V."/>
            <person name="Pang K.C."/>
            <person name="Pavan W.J."/>
            <person name="Pavesi G."/>
            <person name="Pesole G."/>
            <person name="Petrovsky N."/>
            <person name="Piazza S."/>
            <person name="Reed J."/>
            <person name="Reid J.F."/>
            <person name="Ring B.Z."/>
            <person name="Ringwald M."/>
            <person name="Rost B."/>
            <person name="Ruan Y."/>
            <person name="Salzberg S.L."/>
            <person name="Sandelin A."/>
            <person name="Schneider C."/>
            <person name="Schoenbach C."/>
            <person name="Sekiguchi K."/>
            <person name="Semple C.A."/>
            <person name="Seno S."/>
            <person name="Sessa L."/>
            <person name="Sheng Y."/>
            <person name="Shibata Y."/>
            <person name="Shimada H."/>
            <person name="Shimada K."/>
            <person name="Silva D."/>
            <person name="Sinclair B."/>
            <person name="Sperling S."/>
            <person name="Stupka E."/>
            <person name="Sugiura K."/>
            <person name="Sultana R."/>
            <person name="Takenaka Y."/>
            <person name="Taki K."/>
            <person name="Tammoja K."/>
            <person name="Tan S.L."/>
            <person name="Tang S."/>
            <person name="Taylor M.S."/>
            <person name="Tegner J."/>
            <person name="Teichmann S.A."/>
            <person name="Ueda H.R."/>
            <person name="van Nimwegen E."/>
            <person name="Verardo R."/>
            <person name="Wei C.L."/>
            <person name="Yagi K."/>
            <person name="Yamanishi H."/>
            <person name="Zabarovsky E."/>
            <person name="Zhu S."/>
            <person name="Zimmer A."/>
            <person name="Hide W."/>
            <person name="Bult C."/>
            <person name="Grimmond S.M."/>
            <person name="Teasdale R.D."/>
            <person name="Liu E.T."/>
            <person name="Brusic V."/>
            <person name="Quackenbush J."/>
            <person name="Wahlestedt C."/>
            <person name="Mattick J.S."/>
            <person name="Hume D.A."/>
            <person name="Kai C."/>
            <person name="Sasaki D."/>
            <person name="Tomaru Y."/>
            <person name="Fukuda S."/>
            <person name="Kanamori-Katayama M."/>
            <person name="Suzuki M."/>
            <person name="Aoki J."/>
            <person name="Arakawa T."/>
            <person name="Iida J."/>
            <person name="Imamura K."/>
            <person name="Itoh M."/>
            <person name="Kato T."/>
            <person name="Kawaji H."/>
            <person name="Kawagashira N."/>
            <person name="Kawashima T."/>
            <person name="Kojima M."/>
            <person name="Kondo S."/>
            <person name="Konno H."/>
            <person name="Nakano K."/>
            <person name="Ninomiya N."/>
            <person name="Nishio T."/>
            <person name="Okada M."/>
            <person name="Plessy C."/>
            <person name="Shibata K."/>
            <person name="Shiraki T."/>
            <person name="Suzuki S."/>
            <person name="Tagami M."/>
            <person name="Waki K."/>
            <person name="Watahiki A."/>
            <person name="Okamura-Oho Y."/>
            <person name="Suzuki H."/>
            <person name="Kawai J."/>
            <person name="Hayashizaki Y."/>
        </authorList>
    </citation>
    <scope>NUCLEOTIDE SEQUENCE [LARGE SCALE MRNA]</scope>
    <source>
        <strain>C57BL/6J</strain>
    </source>
</reference>
<reference key="2">
    <citation type="journal article" date="2009" name="PLoS Biol.">
        <title>Lineage-specific biology revealed by a finished genome assembly of the mouse.</title>
        <authorList>
            <person name="Church D.M."/>
            <person name="Goodstadt L."/>
            <person name="Hillier L.W."/>
            <person name="Zody M.C."/>
            <person name="Goldstein S."/>
            <person name="She X."/>
            <person name="Bult C.J."/>
            <person name="Agarwala R."/>
            <person name="Cherry J.L."/>
            <person name="DiCuccio M."/>
            <person name="Hlavina W."/>
            <person name="Kapustin Y."/>
            <person name="Meric P."/>
            <person name="Maglott D."/>
            <person name="Birtle Z."/>
            <person name="Marques A.C."/>
            <person name="Graves T."/>
            <person name="Zhou S."/>
            <person name="Teague B."/>
            <person name="Potamousis K."/>
            <person name="Churas C."/>
            <person name="Place M."/>
            <person name="Herschleb J."/>
            <person name="Runnheim R."/>
            <person name="Forrest D."/>
            <person name="Amos-Landgraf J."/>
            <person name="Schwartz D.C."/>
            <person name="Cheng Z."/>
            <person name="Lindblad-Toh K."/>
            <person name="Eichler E.E."/>
            <person name="Ponting C.P."/>
        </authorList>
    </citation>
    <scope>NUCLEOTIDE SEQUENCE [LARGE SCALE GENOMIC DNA]</scope>
    <source>
        <strain>C57BL/6J</strain>
    </source>
</reference>
<reference key="3">
    <citation type="submission" date="2005-07" db="EMBL/GenBank/DDBJ databases">
        <authorList>
            <person name="Mural R.J."/>
            <person name="Adams M.D."/>
            <person name="Myers E.W."/>
            <person name="Smith H.O."/>
            <person name="Venter J.C."/>
        </authorList>
    </citation>
    <scope>NUCLEOTIDE SEQUENCE [LARGE SCALE GENOMIC DNA]</scope>
</reference>
<reference key="4">
    <citation type="journal article" date="2004" name="Genome Res.">
        <title>The status, quality, and expansion of the NIH full-length cDNA project: the Mammalian Gene Collection (MGC).</title>
        <authorList>
            <consortium name="The MGC Project Team"/>
        </authorList>
    </citation>
    <scope>NUCLEOTIDE SEQUENCE [LARGE SCALE MRNA]</scope>
    <source>
        <strain>C57BL/6J</strain>
        <tissue>Brain</tissue>
    </source>
</reference>
<reference key="5">
    <citation type="journal article" date="2010" name="Cell">
        <title>A tissue-specific atlas of mouse protein phosphorylation and expression.</title>
        <authorList>
            <person name="Huttlin E.L."/>
            <person name="Jedrychowski M.P."/>
            <person name="Elias J.E."/>
            <person name="Goswami T."/>
            <person name="Rad R."/>
            <person name="Beausoleil S.A."/>
            <person name="Villen J."/>
            <person name="Haas W."/>
            <person name="Sowa M.E."/>
            <person name="Gygi S.P."/>
        </authorList>
    </citation>
    <scope>IDENTIFICATION BY MASS SPECTROMETRY [LARGE SCALE ANALYSIS]</scope>
    <source>
        <tissue>Brain</tissue>
        <tissue>Brown adipose tissue</tissue>
        <tissue>Heart</tissue>
        <tissue>Kidney</tissue>
        <tissue>Liver</tissue>
        <tissue>Lung</tissue>
        <tissue>Pancreas</tissue>
        <tissue>Spleen</tissue>
        <tissue>Testis</tissue>
    </source>
</reference>
<protein>
    <recommendedName>
        <fullName>Signal recognition particle subunit SRP68</fullName>
        <shortName>SRP68</shortName>
    </recommendedName>
    <alternativeName>
        <fullName>Signal recognition particle 68 kDa protein</fullName>
    </alternativeName>
</protein>
<keyword id="KW-0007">Acetylation</keyword>
<keyword id="KW-0963">Cytoplasm</keyword>
<keyword id="KW-0256">Endoplasmic reticulum</keyword>
<keyword id="KW-0539">Nucleus</keyword>
<keyword id="KW-0597">Phosphoprotein</keyword>
<keyword id="KW-1185">Reference proteome</keyword>
<keyword id="KW-0687">Ribonucleoprotein</keyword>
<keyword id="KW-0694">RNA-binding</keyword>
<keyword id="KW-0733">Signal recognition particle</keyword>
<proteinExistence type="evidence at protein level"/>